<evidence type="ECO:0000250" key="1">
    <source>
        <dbReference type="UniProtKB" id="A6NFQ2"/>
    </source>
</evidence>
<evidence type="ECO:0000255" key="2">
    <source>
        <dbReference type="PROSITE-ProRule" id="PRU01060"/>
    </source>
</evidence>
<evidence type="ECO:0000305" key="3"/>
<keyword id="KW-1003">Cell membrane</keyword>
<keyword id="KW-0472">Membrane</keyword>
<keyword id="KW-1185">Reference proteome</keyword>
<keyword id="KW-0813">Transport</keyword>
<comment type="function">
    <text evidence="1">Negatively regulates the plasma membrane cation channel TRPM8 activity. Involved in the recruitment of TRPM8 to the cell surface. Promotes prostate cancer cell migration stimulation in a TRPM8-dependent manner.</text>
</comment>
<comment type="subunit">
    <text evidence="1">Interacts with TRPM8 (via N-terminus and C-terminus domains); the interaction inhibits TRPM8 channel activity. Interacts with TRPV6.</text>
</comment>
<comment type="subcellular location">
    <subcellularLocation>
        <location evidence="1">Cell membrane</location>
    </subcellularLocation>
    <text evidence="1">Colocalizes with TRPM8 on the plasma membrane.</text>
</comment>
<comment type="similarity">
    <text evidence="3">Belongs to the TCAF family.</text>
</comment>
<dbReference type="EMBL" id="BC148091">
    <property type="protein sequence ID" value="AAI48092.1"/>
    <property type="molecule type" value="mRNA"/>
</dbReference>
<dbReference type="RefSeq" id="NP_001095394.1">
    <property type="nucleotide sequence ID" value="NM_001101924.1"/>
</dbReference>
<dbReference type="SMR" id="A6QLU7"/>
<dbReference type="FunCoup" id="A6QLU7">
    <property type="interactions" value="94"/>
</dbReference>
<dbReference type="MEROPS" id="M98.A03"/>
<dbReference type="PaxDb" id="9913-ENSBTAP00000007200"/>
<dbReference type="GeneID" id="510320"/>
<dbReference type="KEGG" id="bta:510320"/>
<dbReference type="CTD" id="285966"/>
<dbReference type="eggNOG" id="ENOG502QQUS">
    <property type="taxonomic scope" value="Eukaryota"/>
</dbReference>
<dbReference type="InParanoid" id="A6QLU7"/>
<dbReference type="OrthoDB" id="10260387at2759"/>
<dbReference type="Proteomes" id="UP000009136">
    <property type="component" value="Unplaced"/>
</dbReference>
<dbReference type="GO" id="GO:0005886">
    <property type="term" value="C:plasma membrane"/>
    <property type="evidence" value="ECO:0000318"/>
    <property type="project" value="GO_Central"/>
</dbReference>
<dbReference type="GO" id="GO:0044325">
    <property type="term" value="F:transmembrane transporter binding"/>
    <property type="evidence" value="ECO:0000318"/>
    <property type="project" value="GO_Central"/>
</dbReference>
<dbReference type="FunFam" id="1.10.390.30:FF:000001">
    <property type="entry name" value="TRPM8 channel-associated factor 1"/>
    <property type="match status" value="1"/>
</dbReference>
<dbReference type="FunFam" id="3.40.390.80:FF:000001">
    <property type="entry name" value="TRPM8 channel-associated factor 1"/>
    <property type="match status" value="1"/>
</dbReference>
<dbReference type="Gene3D" id="3.40.390.80">
    <property type="entry name" value="Peptidase M60, enhancin-like domain 2"/>
    <property type="match status" value="1"/>
</dbReference>
<dbReference type="Gene3D" id="1.10.390.30">
    <property type="entry name" value="Peptidase M60, enhancin-like domain 3"/>
    <property type="match status" value="1"/>
</dbReference>
<dbReference type="InterPro" id="IPR029062">
    <property type="entry name" value="Class_I_gatase-like"/>
</dbReference>
<dbReference type="InterPro" id="IPR035423">
    <property type="entry name" value="M60-like_N"/>
</dbReference>
<dbReference type="InterPro" id="IPR042279">
    <property type="entry name" value="Pep_M60_3"/>
</dbReference>
<dbReference type="InterPro" id="IPR031161">
    <property type="entry name" value="Peptidase_M60_dom"/>
</dbReference>
<dbReference type="InterPro" id="IPR051244">
    <property type="entry name" value="TCAF"/>
</dbReference>
<dbReference type="PANTHER" id="PTHR15730">
    <property type="entry name" value="EXPERIMENTAL AUTOIMMUNE PROSTATITIS ANTIGEN 2-RELATED"/>
    <property type="match status" value="1"/>
</dbReference>
<dbReference type="PANTHER" id="PTHR15730:SF4">
    <property type="entry name" value="TRPM8 CHANNEL-ASSOCIATED FACTOR 2"/>
    <property type="match status" value="1"/>
</dbReference>
<dbReference type="Pfam" id="PF17291">
    <property type="entry name" value="M60-like_N"/>
    <property type="match status" value="1"/>
</dbReference>
<dbReference type="Pfam" id="PF13402">
    <property type="entry name" value="Peptidase_M60"/>
    <property type="match status" value="1"/>
</dbReference>
<dbReference type="SMART" id="SM01276">
    <property type="entry name" value="M60-like"/>
    <property type="match status" value="1"/>
</dbReference>
<dbReference type="SUPFAM" id="SSF52317">
    <property type="entry name" value="Class I glutamine amidotransferase-like"/>
    <property type="match status" value="1"/>
</dbReference>
<dbReference type="PROSITE" id="PS51723">
    <property type="entry name" value="PEPTIDASE_M60"/>
    <property type="match status" value="1"/>
</dbReference>
<name>TCAF2_BOVIN</name>
<gene>
    <name evidence="1" type="primary">TCAF2</name>
    <name type="synonym">FAM115C</name>
    <name type="synonym">FAM139A</name>
</gene>
<proteinExistence type="evidence at transcript level"/>
<organism>
    <name type="scientific">Bos taurus</name>
    <name type="common">Bovine</name>
    <dbReference type="NCBI Taxonomy" id="9913"/>
    <lineage>
        <taxon>Eukaryota</taxon>
        <taxon>Metazoa</taxon>
        <taxon>Chordata</taxon>
        <taxon>Craniata</taxon>
        <taxon>Vertebrata</taxon>
        <taxon>Euteleostomi</taxon>
        <taxon>Mammalia</taxon>
        <taxon>Eutheria</taxon>
        <taxon>Laurasiatheria</taxon>
        <taxon>Artiodactyla</taxon>
        <taxon>Ruminantia</taxon>
        <taxon>Pecora</taxon>
        <taxon>Bovidae</taxon>
        <taxon>Bovinae</taxon>
        <taxon>Bos</taxon>
    </lineage>
</organism>
<protein>
    <recommendedName>
        <fullName evidence="1">TRPM8 channel-associated factor 2</fullName>
    </recommendedName>
    <alternativeName>
        <fullName evidence="1">TRP channel-associated factor 2</fullName>
    </alternativeName>
</protein>
<reference key="1">
    <citation type="submission" date="2007-06" db="EMBL/GenBank/DDBJ databases">
        <authorList>
            <consortium name="NIH - Mammalian Gene Collection (MGC) project"/>
        </authorList>
    </citation>
    <scope>NUCLEOTIDE SEQUENCE [LARGE SCALE MRNA]</scope>
    <source>
        <strain>Hereford</strain>
        <tissue>Basal ganglia</tissue>
    </source>
</reference>
<feature type="chain" id="PRO_0000320186" description="TRPM8 channel-associated factor 2">
    <location>
        <begin position="1"/>
        <end position="914"/>
    </location>
</feature>
<feature type="domain" description="Peptidase M60" evidence="2">
    <location>
        <begin position="541"/>
        <end position="840"/>
    </location>
</feature>
<accession>A6QLU7</accession>
<sequence length="914" mass="99893">MATTPAAAFEALMDGVTSWELPEGPVPSELLLTGEAAFPVMVNDKGQVLIAASFYGRGRLVVVSHEGYLLDAGLARFLLNAVRWLSPSPGAPVGVHPSLASLAHILEGSGVEAQVHPEPAEPLGVYCISAYNDTMTAELIQFVKRGGGLLIGGQAWHWASQHGSDQVLSEFPGNQVTSVAGVYFTDTYGVKGRFKVSKKVPKIPLQVRCGEDLRQDQQQLLEGISELDIGTKGLPSQLLVHGALAFPLGLDASLRCFLAAARYGRGRVVLAAHEGMLSAPSLGPFLLNAVRWLAKGQTGKVGVNTSLEKLHTLLLEHGLECSLEPHLTSGVCVYCCTAYSDKEAKQLQEFVAEGGGLLIGGHAWWWASQNPGRSALADFPGNVILNSFGLSILPWTLDPGCFPVPSADSLNYHFRKALSEFQATLNLEGGNLEKNWLAKLRVDGAAFLQIPAEGVPAYASLHRLLRKQLRLRLSGFPAVSRENPVAGDSCEAVVLCLATELARSGTDCSELAQGLGAWSCSSNLCPSEHTVEINARNPSDDAWMSTGLNLPNGQLTEVCLCEAAACAGLKLQIGCHTDNLMSASKLSRAPVVTHQCHMDRTEQLVSNLWGGLLYVIVPTGCNLGPMSITIKRAVPAPYYKLGETSLEAWRSCIQESPAPWGELATDNIILTVPTADLRALEDPEPLLRLWDEMMEAIARLAAQPFPFRRPERIVADVQISAGWMHSGYPIMCHLESVSELIDETGMRSRGLWGPVHELGHNQQREQWEFPPHTTEATCNLWSVYVHETVLGIPRAQAHPALSPPERENRIKTHLEKGAPLCDWKVWTALETYLQLQEAFGWEPFTQLFAEYQTLSDIPNDNPGKMNLWVRKFSEKVQKNLAPFFEAWGWPVEKEVASSLACLPEWEENPMRMYI</sequence>